<accession>C1CE08</accession>
<protein>
    <recommendedName>
        <fullName evidence="1">4-hydroxy-tetrahydrodipicolinate synthase</fullName>
        <shortName evidence="1">HTPA synthase</shortName>
        <ecNumber evidence="1">4.3.3.7</ecNumber>
    </recommendedName>
</protein>
<name>DAPA_STRZJ</name>
<proteinExistence type="inferred from homology"/>
<reference key="1">
    <citation type="journal article" date="2010" name="Genome Biol.">
        <title>Structure and dynamics of the pan-genome of Streptococcus pneumoniae and closely related species.</title>
        <authorList>
            <person name="Donati C."/>
            <person name="Hiller N.L."/>
            <person name="Tettelin H."/>
            <person name="Muzzi A."/>
            <person name="Croucher N.J."/>
            <person name="Angiuoli S.V."/>
            <person name="Oggioni M."/>
            <person name="Dunning Hotopp J.C."/>
            <person name="Hu F.Z."/>
            <person name="Riley D.R."/>
            <person name="Covacci A."/>
            <person name="Mitchell T.J."/>
            <person name="Bentley S.D."/>
            <person name="Kilian M."/>
            <person name="Ehrlich G.D."/>
            <person name="Rappuoli R."/>
            <person name="Moxon E.R."/>
            <person name="Masignani V."/>
        </authorList>
    </citation>
    <scope>NUCLEOTIDE SEQUENCE [LARGE SCALE GENOMIC DNA]</scope>
    <source>
        <strain>JJA</strain>
    </source>
</reference>
<feature type="chain" id="PRO_1000134881" description="4-hydroxy-tetrahydrodipicolinate synthase">
    <location>
        <begin position="1"/>
        <end position="311"/>
    </location>
</feature>
<feature type="active site" description="Proton donor/acceptor" evidence="1">
    <location>
        <position position="140"/>
    </location>
</feature>
<feature type="active site" description="Schiff-base intermediate with substrate" evidence="1">
    <location>
        <position position="168"/>
    </location>
</feature>
<feature type="binding site" evidence="1">
    <location>
        <position position="51"/>
    </location>
    <ligand>
        <name>pyruvate</name>
        <dbReference type="ChEBI" id="CHEBI:15361"/>
    </ligand>
</feature>
<feature type="binding site" evidence="1">
    <location>
        <position position="209"/>
    </location>
    <ligand>
        <name>pyruvate</name>
        <dbReference type="ChEBI" id="CHEBI:15361"/>
    </ligand>
</feature>
<feature type="site" description="Part of a proton relay during catalysis" evidence="1">
    <location>
        <position position="50"/>
    </location>
</feature>
<feature type="site" description="Part of a proton relay during catalysis" evidence="1">
    <location>
        <position position="114"/>
    </location>
</feature>
<keyword id="KW-0028">Amino-acid biosynthesis</keyword>
<keyword id="KW-0963">Cytoplasm</keyword>
<keyword id="KW-0220">Diaminopimelate biosynthesis</keyword>
<keyword id="KW-0456">Lyase</keyword>
<keyword id="KW-0457">Lysine biosynthesis</keyword>
<keyword id="KW-0704">Schiff base</keyword>
<organism>
    <name type="scientific">Streptococcus pneumoniae (strain JJA)</name>
    <dbReference type="NCBI Taxonomy" id="488222"/>
    <lineage>
        <taxon>Bacteria</taxon>
        <taxon>Bacillati</taxon>
        <taxon>Bacillota</taxon>
        <taxon>Bacilli</taxon>
        <taxon>Lactobacillales</taxon>
        <taxon>Streptococcaceae</taxon>
        <taxon>Streptococcus</taxon>
    </lineage>
</organism>
<sequence length="311" mass="33884">MSYQDLKECKIITAFITPFHEDGSINFDAIPALIEHLLAHHTDGILLAGTTAESPTLTHDEELELFAAVQKVVNGRVPLIAGVGTNDTRDSIEFVKEVAEFGGFAAGLAIVPYYNKPSQEGMYQHFKAIADASDLPIIIYNIPGRVVVELTPETMLRLADHPNIIGVKECTSLANMAYLIEHKPEEFLIYTGEDGDAFHAMNLGADGVISVASHTNGDEMHEMFTAIAESDMKKAAAIQRKFIPKVNALFSYPSPAPVKAILNYMGFEAGPTRLPLVPAPEEDAKRIIKVVVDGDYEATKATVTGVLRPDY</sequence>
<comment type="function">
    <text evidence="1">Catalyzes the condensation of (S)-aspartate-beta-semialdehyde [(S)-ASA] and pyruvate to 4-hydroxy-tetrahydrodipicolinate (HTPA).</text>
</comment>
<comment type="catalytic activity">
    <reaction evidence="1">
        <text>L-aspartate 4-semialdehyde + pyruvate = (2S,4S)-4-hydroxy-2,3,4,5-tetrahydrodipicolinate + H2O + H(+)</text>
        <dbReference type="Rhea" id="RHEA:34171"/>
        <dbReference type="ChEBI" id="CHEBI:15361"/>
        <dbReference type="ChEBI" id="CHEBI:15377"/>
        <dbReference type="ChEBI" id="CHEBI:15378"/>
        <dbReference type="ChEBI" id="CHEBI:67139"/>
        <dbReference type="ChEBI" id="CHEBI:537519"/>
        <dbReference type="EC" id="4.3.3.7"/>
    </reaction>
</comment>
<comment type="pathway">
    <text evidence="1">Amino-acid biosynthesis; L-lysine biosynthesis via DAP pathway; (S)-tetrahydrodipicolinate from L-aspartate: step 3/4.</text>
</comment>
<comment type="subunit">
    <text evidence="1">Homotetramer; dimer of dimers.</text>
</comment>
<comment type="subcellular location">
    <subcellularLocation>
        <location evidence="1">Cytoplasm</location>
    </subcellularLocation>
</comment>
<comment type="similarity">
    <text evidence="1">Belongs to the DapA family.</text>
</comment>
<comment type="caution">
    <text evidence="2">Was originally thought to be a dihydrodipicolinate synthase (DHDPS), catalyzing the condensation of (S)-aspartate-beta-semialdehyde [(S)-ASA] and pyruvate to dihydrodipicolinate (DHDP). However, it was shown in E.coli that the product of the enzymatic reaction is not dihydrodipicolinate but in fact (4S)-4-hydroxy-2,3,4,5-tetrahydro-(2S)-dipicolinic acid (HTPA), and that the consecutive dehydration reaction leading to DHDP is not spontaneous but catalyzed by DapB.</text>
</comment>
<evidence type="ECO:0000255" key="1">
    <source>
        <dbReference type="HAMAP-Rule" id="MF_00418"/>
    </source>
</evidence>
<evidence type="ECO:0000305" key="2"/>
<dbReference type="EC" id="4.3.3.7" evidence="1"/>
<dbReference type="EMBL" id="CP000919">
    <property type="protein sequence ID" value="ACO19113.1"/>
    <property type="molecule type" value="Genomic_DNA"/>
</dbReference>
<dbReference type="RefSeq" id="WP_000121618.1">
    <property type="nucleotide sequence ID" value="NC_012466.1"/>
</dbReference>
<dbReference type="SMR" id="C1CE08"/>
<dbReference type="KEGG" id="sjj:SPJ_0955"/>
<dbReference type="HOGENOM" id="CLU_049343_7_1_9"/>
<dbReference type="UniPathway" id="UPA00034">
    <property type="reaction ID" value="UER00017"/>
</dbReference>
<dbReference type="Proteomes" id="UP000002206">
    <property type="component" value="Chromosome"/>
</dbReference>
<dbReference type="GO" id="GO:0005829">
    <property type="term" value="C:cytosol"/>
    <property type="evidence" value="ECO:0007669"/>
    <property type="project" value="TreeGrafter"/>
</dbReference>
<dbReference type="GO" id="GO:0008840">
    <property type="term" value="F:4-hydroxy-tetrahydrodipicolinate synthase activity"/>
    <property type="evidence" value="ECO:0007669"/>
    <property type="project" value="UniProtKB-UniRule"/>
</dbReference>
<dbReference type="GO" id="GO:0019877">
    <property type="term" value="P:diaminopimelate biosynthetic process"/>
    <property type="evidence" value="ECO:0007669"/>
    <property type="project" value="UniProtKB-UniRule"/>
</dbReference>
<dbReference type="GO" id="GO:0009089">
    <property type="term" value="P:lysine biosynthetic process via diaminopimelate"/>
    <property type="evidence" value="ECO:0007669"/>
    <property type="project" value="UniProtKB-UniRule"/>
</dbReference>
<dbReference type="CDD" id="cd00950">
    <property type="entry name" value="DHDPS"/>
    <property type="match status" value="1"/>
</dbReference>
<dbReference type="Gene3D" id="3.20.20.70">
    <property type="entry name" value="Aldolase class I"/>
    <property type="match status" value="1"/>
</dbReference>
<dbReference type="HAMAP" id="MF_00418">
    <property type="entry name" value="DapA"/>
    <property type="match status" value="1"/>
</dbReference>
<dbReference type="InterPro" id="IPR013785">
    <property type="entry name" value="Aldolase_TIM"/>
</dbReference>
<dbReference type="InterPro" id="IPR005263">
    <property type="entry name" value="DapA"/>
</dbReference>
<dbReference type="InterPro" id="IPR002220">
    <property type="entry name" value="DapA-like"/>
</dbReference>
<dbReference type="InterPro" id="IPR020625">
    <property type="entry name" value="Schiff_base-form_aldolases_AS"/>
</dbReference>
<dbReference type="NCBIfam" id="TIGR00674">
    <property type="entry name" value="dapA"/>
    <property type="match status" value="1"/>
</dbReference>
<dbReference type="PANTHER" id="PTHR12128:SF66">
    <property type="entry name" value="4-HYDROXY-2-OXOGLUTARATE ALDOLASE, MITOCHONDRIAL"/>
    <property type="match status" value="1"/>
</dbReference>
<dbReference type="PANTHER" id="PTHR12128">
    <property type="entry name" value="DIHYDRODIPICOLINATE SYNTHASE"/>
    <property type="match status" value="1"/>
</dbReference>
<dbReference type="Pfam" id="PF00701">
    <property type="entry name" value="DHDPS"/>
    <property type="match status" value="1"/>
</dbReference>
<dbReference type="PIRSF" id="PIRSF001365">
    <property type="entry name" value="DHDPS"/>
    <property type="match status" value="1"/>
</dbReference>
<dbReference type="PRINTS" id="PR00146">
    <property type="entry name" value="DHPICSNTHASE"/>
</dbReference>
<dbReference type="SMART" id="SM01130">
    <property type="entry name" value="DHDPS"/>
    <property type="match status" value="1"/>
</dbReference>
<dbReference type="SUPFAM" id="SSF51569">
    <property type="entry name" value="Aldolase"/>
    <property type="match status" value="1"/>
</dbReference>
<dbReference type="PROSITE" id="PS00666">
    <property type="entry name" value="DHDPS_2"/>
    <property type="match status" value="1"/>
</dbReference>
<gene>
    <name evidence="1" type="primary">dapA</name>
    <name type="ordered locus">SPJ_0955</name>
</gene>